<feature type="chain" id="PRO_0000457788" description="Protein argonaute">
    <location>
        <begin position="1"/>
        <end position="735"/>
    </location>
</feature>
<feature type="region of interest" description="N-terminal domain" evidence="1">
    <location>
        <begin position="1"/>
        <end position="94"/>
    </location>
</feature>
<feature type="region of interest" description="Linker L1" evidence="1">
    <location>
        <begin position="95"/>
        <end position="180"/>
    </location>
</feature>
<feature type="region of interest" description="PAZ domain" evidence="1">
    <location>
        <begin position="181"/>
        <end position="284"/>
    </location>
</feature>
<feature type="region of interest" description="Linker L2" evidence="1">
    <location>
        <begin position="285"/>
        <end position="369"/>
    </location>
</feature>
<feature type="region of interest" description="Mid domain" evidence="1">
    <location>
        <begin position="370"/>
        <end position="498"/>
    </location>
</feature>
<feature type="region of interest" description="PIWI domain" evidence="1">
    <location>
        <begin position="499"/>
        <end position="735"/>
    </location>
</feature>
<feature type="active site" evidence="1 5">
    <location>
        <position position="516"/>
    </location>
</feature>
<feature type="active site" evidence="1">
    <location>
        <position position="550"/>
    </location>
</feature>
<feature type="active site" evidence="1 5">
    <location>
        <position position="584"/>
    </location>
</feature>
<feature type="active site" evidence="1 5">
    <location>
        <position position="709"/>
    </location>
</feature>
<feature type="binding site" evidence="1">
    <location>
        <position position="516"/>
    </location>
    <ligand>
        <name>Mn(2+)</name>
        <dbReference type="ChEBI" id="CHEBI:29035"/>
        <label>1</label>
    </ligand>
</feature>
<feature type="binding site" evidence="1">
    <location>
        <position position="516"/>
    </location>
    <ligand>
        <name>Mn(2+)</name>
        <dbReference type="ChEBI" id="CHEBI:29035"/>
        <label>2</label>
    </ligand>
</feature>
<feature type="binding site" evidence="1">
    <location>
        <position position="584"/>
    </location>
    <ligand>
        <name>Mn(2+)</name>
        <dbReference type="ChEBI" id="CHEBI:29035"/>
        <label>1</label>
    </ligand>
</feature>
<feature type="binding site" evidence="1">
    <location>
        <position position="709"/>
    </location>
    <ligand>
        <name>Mn(2+)</name>
        <dbReference type="ChEBI" id="CHEBI:29035"/>
        <label>2</label>
    </ligand>
</feature>
<feature type="binding site" evidence="1">
    <location>
        <position position="735"/>
    </location>
    <ligand>
        <name>Mn(2+)</name>
        <dbReference type="ChEBI" id="CHEBI:29035"/>
        <label>3</label>
    </ligand>
</feature>
<feature type="mutagenesis site" description="No cleavage of target ssDNA, no DNA purifies with protein; when associated with A-584 and A-709." evidence="2">
    <original>D</original>
    <variation>A</variation>
    <location>
        <position position="516"/>
    </location>
</feature>
<feature type="mutagenesis site" description="No cleavage of target ssDNA, no DNA purifies with protein; when associated with A-516 and A-709." evidence="2">
    <original>D</original>
    <variation>A</variation>
    <location>
        <position position="584"/>
    </location>
</feature>
<feature type="mutagenesis site" description="No cleavage of target ssDNA, no DNA purifies with protein; when associated with A-516 and A-584." evidence="2">
    <original>D</original>
    <variation>A</variation>
    <location>
        <position position="709"/>
    </location>
</feature>
<evidence type="ECO:0000250" key="1">
    <source>
        <dbReference type="UniProtKB" id="Q746M7"/>
    </source>
</evidence>
<evidence type="ECO:0000269" key="2">
    <source>
    </source>
</evidence>
<evidence type="ECO:0000303" key="3">
    <source>
    </source>
</evidence>
<evidence type="ECO:0000305" key="4"/>
<evidence type="ECO:0000305" key="5">
    <source>
    </source>
</evidence>
<evidence type="ECO:0000312" key="6">
    <source>
        <dbReference type="EMBL" id="ABB57564.1"/>
    </source>
</evidence>
<organism>
    <name type="scientific">Synechococcus elongatus (strain ATCC 33912 / PCC 7942 / FACHB-805)</name>
    <name type="common">Anacystis nidulans R2</name>
    <dbReference type="NCBI Taxonomy" id="1140"/>
    <lineage>
        <taxon>Bacteria</taxon>
        <taxon>Bacillati</taxon>
        <taxon>Cyanobacteriota</taxon>
        <taxon>Cyanophyceae</taxon>
        <taxon>Synechococcales</taxon>
        <taxon>Synechococcaceae</taxon>
        <taxon>Synechococcus</taxon>
    </lineage>
</organism>
<name>AGO_SYNE7</name>
<keyword id="KW-0238">DNA-binding</keyword>
<keyword id="KW-0255">Endonuclease</keyword>
<keyword id="KW-0378">Hydrolase</keyword>
<keyword id="KW-0464">Manganese</keyword>
<keyword id="KW-0479">Metal-binding</keyword>
<keyword id="KW-0540">Nuclease</keyword>
<keyword id="KW-1185">Reference proteome</keyword>
<comment type="function">
    <text evidence="2">A DNA-guided ssDNA endonuclease that might play a role in defense against invading mobile genetic elements. Uses short ssDNA sequences as guides (gDNA) to bind complementary target strands, resulting in cleavage of the target DNA (tDNA). The cleavage site is 10 nucleotides (nt) downstream of the target residue base-paired with the 5'-end of the gDNA. Both 5'-P and 5'-OH gDNAs confer activity; a 5'-OH guide cleaves between nt 10-11 and nt 11-12. Guide DNA mismatches in the seed (nt 2-9) can enhance activity, mismatches 1-5 nt after the cleavage site block activity. Has no appreciable activity with guide RNA or on target RNA. In situ binds to 5'-phosphorylated DNA 14-20 nt in length; small DNA maps over the chromosome and plasmid with some preference for the replication origin and the probable termination site. Also has weak guide-independent nuclease activity on DNA called 'chopping'. Overexpression of wild-type or catalytically inactive mutant has no visible effect during growth under continuous high light for up to a month.</text>
</comment>
<comment type="cofactor">
    <cofactor evidence="2">
        <name>Mn(2+)</name>
        <dbReference type="ChEBI" id="CHEBI:29035"/>
    </cofactor>
    <text evidence="1 2">Cleavage is more efficient in Mn(2+), has weak cleavage activity with Mg(2+) (PubMed:32013676). Cleavage probaby requires 2 divalent metal cations (By similarity).</text>
</comment>
<comment type="subunit">
    <text evidence="2">Copurifies with SSB proteins Synpcc7942_0079 and Synpcc7942_0301 as well as other proteins.</text>
</comment>
<comment type="induction">
    <text evidence="2">Transcribed constitutively at low levels.</text>
</comment>
<comment type="domain">
    <text evidence="1">Has 4 domains (N-terminal, PAZ, Mid and PIWI). The N-terminal and PAZ domains are joined by linker L1, the PAZ and Mid domains are joined by linker L2. The domains assemble in 2 lobes; the PAZ lobe consists of the N-terminal, L1, PAZ and L2 domains, while the PIWI lobe has the Mid and PIWI domains. The PIWI domain assumes an RNase H fold and has the catalytic residues. gDNA lies between the 2 lobes, with its unpaired 5'-end anchored in the Mid lobe.</text>
</comment>
<comment type="disruption phenotype">
    <text evidence="2">No visible phenotype during growth under continuous high light (250 umol photons m(-2) sec(-1)).</text>
</comment>
<comment type="similarity">
    <text evidence="4">Belongs to the argonaute family. Long pAgo subfamily.</text>
</comment>
<sequence>MDLLSNLRRSSIVLNRFYVKSLSQSDLTAYEYRCIFKKTPELGDEKRLLASICYKLGAIAVRIGSNIITKEAVRPEKLQGHDWQLVQMGTKQLDCRNDAHRCALETFERKFLERDLSASSQTEVRKAAEGGLIWWVVGAKGIEKSGNGWEVHRGRRIDVSLDAEGNLYLEIDIHHRFYTPWTVHQWLEQYPEIPLSYVRNNYLDERHGFINWQYGRFTQERPQDILLDCLGMSLAEYHLNKGATEEEVQQSYVVYVKPISWRKGKLTAHLSRRLSPSLTMEMLAKVAEDSTVCDREKREIRAVFKSIKQSINQRLQEAQKTASWILTKTYGISSPAIALSCDGYLLPAAKLLAANKQPVSKTADIRNKGCAKIGETSFGYLNLYNNQLQYPLEVHKCLLEIANKNNLQLSLDQRRVLSDYPQDDLDQQMFWQTWSSQGIKTVLVVMPWDSHHDKQKIRIQAIQAGIATQFMVPLPKADKYKALNVTLGLLCKAGWQPIQLESVDHPEVADLIIGFDTGTNRELYYGTSAFAVLADGQSLGWELPAVQRGETFSGQAIWQTVSKLIIKFYQICQRYPQKLLLMRDGLVQEGEFQQTIELLKERKIAVDVISVRKSGAGRMGQEIYENGQLVYRDAAIGSVILQPAERSFIMVTSQPVSKTIGSIRPLRIVHEYGSTDLELLALQTYHLTQLHPASGFRSCRLPWVLHLADRSSKEFQRIGQISVLQNISRDKLIAV</sequence>
<gene>
    <name evidence="4" type="primary">ago</name>
    <name evidence="6" type="ordered locus">Synpcc7942_1534</name>
</gene>
<protein>
    <recommendedName>
        <fullName evidence="3">Protein argonaute</fullName>
        <shortName evidence="3">SeAgo</shortName>
        <ecNumber evidence="2">3.1.24.-</ecNumber>
    </recommendedName>
    <alternativeName>
        <fullName evidence="3">Ago nuclease</fullName>
    </alternativeName>
</protein>
<accession>Q31N05</accession>
<reference evidence="6" key="1">
    <citation type="submission" date="2005-08" db="EMBL/GenBank/DDBJ databases">
        <title>Complete sequence of chromosome 1 of Synechococcus elongatus PCC 7942.</title>
        <authorList>
            <consortium name="US DOE Joint Genome Institute"/>
            <person name="Copeland A."/>
            <person name="Lucas S."/>
            <person name="Lapidus A."/>
            <person name="Barry K."/>
            <person name="Detter J.C."/>
            <person name="Glavina T."/>
            <person name="Hammon N."/>
            <person name="Israni S."/>
            <person name="Pitluck S."/>
            <person name="Schmutz J."/>
            <person name="Larimer F."/>
            <person name="Land M."/>
            <person name="Kyrpides N."/>
            <person name="Lykidis A."/>
            <person name="Golden S."/>
            <person name="Richardson P."/>
        </authorList>
    </citation>
    <scope>NUCLEOTIDE SEQUENCE [LARGE SCALE GENOMIC DNA]</scope>
    <source>
        <strain>ATCC 33912 / PCC 7942 / FACHB-805</strain>
    </source>
</reference>
<reference key="2">
    <citation type="journal article" date="2020" name="RNA Biol.">
        <title>Genome-wide DNA sampling by Ago nuclease from the cyanobacterium Synechococcus elongatus.</title>
        <authorList>
            <person name="Olina A."/>
            <person name="Kuzmenko A."/>
            <person name="Ninova M."/>
            <person name="Aravin A.A."/>
            <person name="Kulbachinskiy A."/>
            <person name="Esyunina D."/>
        </authorList>
    </citation>
    <scope>FUNCTION</scope>
    <scope>CATALYTIC ACTIVITY</scope>
    <scope>PROBABLE ACTIVE SITES</scope>
    <scope>COFACTOR</scope>
    <scope>SUBUNIT</scope>
    <scope>INDUCTION</scope>
    <scope>DISRUPTION PHENOTYPE</scope>
    <scope>MUTAGENESIS OF ASP-516; ASP-584 AND ASP-709</scope>
    <source>
        <strain>ATCC 33912 / PCC 7942 / FACHB-805</strain>
    </source>
</reference>
<proteinExistence type="evidence at protein level"/>
<dbReference type="EC" id="3.1.24.-" evidence="2"/>
<dbReference type="EMBL" id="CP000100">
    <property type="protein sequence ID" value="ABB57564.1"/>
    <property type="molecule type" value="Genomic_DNA"/>
</dbReference>
<dbReference type="RefSeq" id="WP_011378069.1">
    <property type="nucleotide sequence ID" value="NZ_JACJTX010000004.1"/>
</dbReference>
<dbReference type="SMR" id="Q31N05"/>
<dbReference type="STRING" id="1140.Synpcc7942_1534"/>
<dbReference type="PaxDb" id="1140-Synpcc7942_1534"/>
<dbReference type="KEGG" id="syf:Synpcc7942_1534"/>
<dbReference type="eggNOG" id="COG1431">
    <property type="taxonomic scope" value="Bacteria"/>
</dbReference>
<dbReference type="HOGENOM" id="CLU_383443_0_0_3"/>
<dbReference type="OrthoDB" id="544779at2"/>
<dbReference type="BioCyc" id="SYNEL:SYNPCC7942_1534-MONOMER"/>
<dbReference type="Proteomes" id="UP000889800">
    <property type="component" value="Chromosome"/>
</dbReference>
<dbReference type="GO" id="GO:0003677">
    <property type="term" value="F:DNA binding"/>
    <property type="evidence" value="ECO:0007669"/>
    <property type="project" value="UniProtKB-KW"/>
</dbReference>
<dbReference type="GO" id="GO:0004520">
    <property type="term" value="F:DNA endonuclease activity"/>
    <property type="evidence" value="ECO:0000314"/>
    <property type="project" value="UniProtKB"/>
</dbReference>
<dbReference type="GO" id="GO:0046872">
    <property type="term" value="F:metal ion binding"/>
    <property type="evidence" value="ECO:0007669"/>
    <property type="project" value="UniProtKB-KW"/>
</dbReference>
<dbReference type="Gene3D" id="2.170.260.50">
    <property type="match status" value="1"/>
</dbReference>
<dbReference type="Gene3D" id="3.40.50.2300">
    <property type="match status" value="1"/>
</dbReference>
<dbReference type="Gene3D" id="3.30.420.10">
    <property type="entry name" value="Ribonuclease H-like superfamily/Ribonuclease H"/>
    <property type="match status" value="1"/>
</dbReference>
<dbReference type="InterPro" id="IPR040895">
    <property type="entry name" value="Ago_PAZ"/>
</dbReference>
<dbReference type="InterPro" id="IPR003165">
    <property type="entry name" value="Piwi"/>
</dbReference>
<dbReference type="InterPro" id="IPR012337">
    <property type="entry name" value="RNaseH-like_sf"/>
</dbReference>
<dbReference type="InterPro" id="IPR036397">
    <property type="entry name" value="RNaseH_sf"/>
</dbReference>
<dbReference type="Pfam" id="PF18309">
    <property type="entry name" value="PAZ_3"/>
    <property type="match status" value="1"/>
</dbReference>
<dbReference type="Pfam" id="PF02171">
    <property type="entry name" value="Piwi"/>
    <property type="match status" value="1"/>
</dbReference>
<dbReference type="SMART" id="SM00950">
    <property type="entry name" value="Piwi"/>
    <property type="match status" value="1"/>
</dbReference>
<dbReference type="SUPFAM" id="SSF53098">
    <property type="entry name" value="Ribonuclease H-like"/>
    <property type="match status" value="1"/>
</dbReference>